<accession>Q06R75</accession>
<protein>
    <recommendedName>
        <fullName evidence="1">NAD(P)H-quinone oxidoreductase subunit 1, chloroplastic</fullName>
        <ecNumber evidence="1">7.1.1.-</ecNumber>
    </recommendedName>
    <alternativeName>
        <fullName evidence="1">NAD(P)H dehydrogenase subunit 1</fullName>
        <shortName evidence="1">NDH subunit 1</shortName>
    </alternativeName>
    <alternativeName>
        <fullName evidence="1">NADH-plastoquinone oxidoreductase subunit 1</fullName>
    </alternativeName>
</protein>
<comment type="function">
    <text evidence="1">NDH shuttles electrons from NAD(P)H:plastoquinone, via FMN and iron-sulfur (Fe-S) centers, to quinones in the photosynthetic chain and possibly in a chloroplast respiratory chain. The immediate electron acceptor for the enzyme in this species is believed to be plastoquinone. Couples the redox reaction to proton translocation, and thus conserves the redox energy in a proton gradient.</text>
</comment>
<comment type="catalytic activity">
    <reaction evidence="1">
        <text>a plastoquinone + NADH + (n+1) H(+)(in) = a plastoquinol + NAD(+) + n H(+)(out)</text>
        <dbReference type="Rhea" id="RHEA:42608"/>
        <dbReference type="Rhea" id="RHEA-COMP:9561"/>
        <dbReference type="Rhea" id="RHEA-COMP:9562"/>
        <dbReference type="ChEBI" id="CHEBI:15378"/>
        <dbReference type="ChEBI" id="CHEBI:17757"/>
        <dbReference type="ChEBI" id="CHEBI:57540"/>
        <dbReference type="ChEBI" id="CHEBI:57945"/>
        <dbReference type="ChEBI" id="CHEBI:62192"/>
    </reaction>
</comment>
<comment type="catalytic activity">
    <reaction evidence="1">
        <text>a plastoquinone + NADPH + (n+1) H(+)(in) = a plastoquinol + NADP(+) + n H(+)(out)</text>
        <dbReference type="Rhea" id="RHEA:42612"/>
        <dbReference type="Rhea" id="RHEA-COMP:9561"/>
        <dbReference type="Rhea" id="RHEA-COMP:9562"/>
        <dbReference type="ChEBI" id="CHEBI:15378"/>
        <dbReference type="ChEBI" id="CHEBI:17757"/>
        <dbReference type="ChEBI" id="CHEBI:57783"/>
        <dbReference type="ChEBI" id="CHEBI:58349"/>
        <dbReference type="ChEBI" id="CHEBI:62192"/>
    </reaction>
</comment>
<comment type="subunit">
    <text evidence="1">NDH is composed of at least 16 different subunits, 5 of which are encoded in the nucleus.</text>
</comment>
<comment type="subcellular location">
    <subcellularLocation>
        <location evidence="1">Plastid</location>
        <location evidence="1">Chloroplast thylakoid membrane</location>
        <topology evidence="1">Multi-pass membrane protein</topology>
    </subcellularLocation>
</comment>
<comment type="similarity">
    <text evidence="1">Belongs to the complex I subunit 1 family.</text>
</comment>
<sequence>MIIYNTTELQAIHSFSRLEFLKEVYGSIWVLIPILTLVLGITLGVLVIVWLEREISAGIQQRIGPEYAGPLGILQALADGTKLLFKENLFPSRGDTRLFTIGPSIAVISILLSYSVIPFGYRLILGDLSIGVFLWIAVSSLAPIGLLMSGYGSNNKYSFLGGLRAAAQSISYEIPLTLCVLSISLLSNSFSTVDIVEAQSKYGFWGWNLWRQPIGFIVFLISSLAECERLPFDLPEAEEELVAGYQTEYSGIKFGLFYVASYLNLLVSSLFVTVLYLGGWNLSIPYLFVPELFERGKVFETIICIFITLAKTYLFLFISIATRWTLPRLRMDQLLNLGWKFLLPISLGNLLLTTSFQLLSL</sequence>
<keyword id="KW-0150">Chloroplast</keyword>
<keyword id="KW-0472">Membrane</keyword>
<keyword id="KW-0520">NAD</keyword>
<keyword id="KW-0521">NADP</keyword>
<keyword id="KW-0934">Plastid</keyword>
<keyword id="KW-0618">Plastoquinone</keyword>
<keyword id="KW-0874">Quinone</keyword>
<keyword id="KW-0793">Thylakoid</keyword>
<keyword id="KW-1278">Translocase</keyword>
<keyword id="KW-0812">Transmembrane</keyword>
<keyword id="KW-1133">Transmembrane helix</keyword>
<feature type="chain" id="PRO_0000275582" description="NAD(P)H-quinone oxidoreductase subunit 1, chloroplastic">
    <location>
        <begin position="1"/>
        <end position="361"/>
    </location>
</feature>
<feature type="transmembrane region" description="Helical" evidence="1">
    <location>
        <begin position="28"/>
        <end position="48"/>
    </location>
</feature>
<feature type="transmembrane region" description="Helical" evidence="1">
    <location>
        <begin position="99"/>
        <end position="119"/>
    </location>
</feature>
<feature type="transmembrane region" description="Helical" evidence="1">
    <location>
        <begin position="128"/>
        <end position="148"/>
    </location>
</feature>
<feature type="transmembrane region" description="Helical" evidence="1">
    <location>
        <begin position="249"/>
        <end position="269"/>
    </location>
</feature>
<feature type="transmembrane region" description="Helical" evidence="1">
    <location>
        <begin position="270"/>
        <end position="290"/>
    </location>
</feature>
<feature type="transmembrane region" description="Helical" evidence="1">
    <location>
        <begin position="301"/>
        <end position="321"/>
    </location>
</feature>
<feature type="transmembrane region" description="Helical" evidence="1">
    <location>
        <begin position="341"/>
        <end position="361"/>
    </location>
</feature>
<name>NU1C_JASNU</name>
<evidence type="ECO:0000255" key="1">
    <source>
        <dbReference type="HAMAP-Rule" id="MF_01350"/>
    </source>
</evidence>
<dbReference type="EC" id="7.1.1.-" evidence="1"/>
<dbReference type="EMBL" id="DQ673255">
    <property type="protein sequence ID" value="ABG74684.1"/>
    <property type="molecule type" value="Genomic_DNA"/>
</dbReference>
<dbReference type="RefSeq" id="YP_778546.1">
    <property type="nucleotide sequence ID" value="NC_008407.1"/>
</dbReference>
<dbReference type="SMR" id="Q06R75"/>
<dbReference type="GeneID" id="4319837"/>
<dbReference type="GO" id="GO:0009535">
    <property type="term" value="C:chloroplast thylakoid membrane"/>
    <property type="evidence" value="ECO:0007669"/>
    <property type="project" value="UniProtKB-SubCell"/>
</dbReference>
<dbReference type="GO" id="GO:0003954">
    <property type="term" value="F:NADH dehydrogenase activity"/>
    <property type="evidence" value="ECO:0007669"/>
    <property type="project" value="TreeGrafter"/>
</dbReference>
<dbReference type="GO" id="GO:0016655">
    <property type="term" value="F:oxidoreductase activity, acting on NAD(P)H, quinone or similar compound as acceptor"/>
    <property type="evidence" value="ECO:0007669"/>
    <property type="project" value="UniProtKB-UniRule"/>
</dbReference>
<dbReference type="GO" id="GO:0048038">
    <property type="term" value="F:quinone binding"/>
    <property type="evidence" value="ECO:0007669"/>
    <property type="project" value="UniProtKB-KW"/>
</dbReference>
<dbReference type="GO" id="GO:0009060">
    <property type="term" value="P:aerobic respiration"/>
    <property type="evidence" value="ECO:0007669"/>
    <property type="project" value="TreeGrafter"/>
</dbReference>
<dbReference type="GO" id="GO:0019684">
    <property type="term" value="P:photosynthesis, light reaction"/>
    <property type="evidence" value="ECO:0007669"/>
    <property type="project" value="UniProtKB-UniRule"/>
</dbReference>
<dbReference type="HAMAP" id="MF_01350">
    <property type="entry name" value="NDH1_NuoH"/>
    <property type="match status" value="1"/>
</dbReference>
<dbReference type="InterPro" id="IPR001694">
    <property type="entry name" value="NADH_UbQ_OxRdtase_su1/FPO"/>
</dbReference>
<dbReference type="InterPro" id="IPR018086">
    <property type="entry name" value="NADH_UbQ_OxRdtase_su1_CS"/>
</dbReference>
<dbReference type="NCBIfam" id="NF004741">
    <property type="entry name" value="PRK06076.1-2"/>
    <property type="match status" value="1"/>
</dbReference>
<dbReference type="PANTHER" id="PTHR11432">
    <property type="entry name" value="NADH DEHYDROGENASE SUBUNIT 1"/>
    <property type="match status" value="1"/>
</dbReference>
<dbReference type="PANTHER" id="PTHR11432:SF3">
    <property type="entry name" value="NADH-UBIQUINONE OXIDOREDUCTASE CHAIN 1"/>
    <property type="match status" value="1"/>
</dbReference>
<dbReference type="Pfam" id="PF00146">
    <property type="entry name" value="NADHdh"/>
    <property type="match status" value="1"/>
</dbReference>
<dbReference type="PROSITE" id="PS00667">
    <property type="entry name" value="COMPLEX1_ND1_1"/>
    <property type="match status" value="1"/>
</dbReference>
<dbReference type="PROSITE" id="PS00668">
    <property type="entry name" value="COMPLEX1_ND1_2"/>
    <property type="match status" value="1"/>
</dbReference>
<organism>
    <name type="scientific">Jasminum nudiflorum</name>
    <name type="common">Winter jasmine</name>
    <dbReference type="NCBI Taxonomy" id="126431"/>
    <lineage>
        <taxon>Eukaryota</taxon>
        <taxon>Viridiplantae</taxon>
        <taxon>Streptophyta</taxon>
        <taxon>Embryophyta</taxon>
        <taxon>Tracheophyta</taxon>
        <taxon>Spermatophyta</taxon>
        <taxon>Magnoliopsida</taxon>
        <taxon>eudicotyledons</taxon>
        <taxon>Gunneridae</taxon>
        <taxon>Pentapetalae</taxon>
        <taxon>asterids</taxon>
        <taxon>lamiids</taxon>
        <taxon>Lamiales</taxon>
        <taxon>Oleaceae</taxon>
        <taxon>Jasmineae</taxon>
        <taxon>Jasminum</taxon>
    </lineage>
</organism>
<reference key="1">
    <citation type="journal article" date="2007" name="Mol. Biol. Evol.">
        <title>Gene relocations within chloroplast genomes of Jasminum and Menodora (Oleaceae) are due to multiple, overlapping inversions.</title>
        <authorList>
            <person name="Lee H.-L."/>
            <person name="Jansen R.K."/>
            <person name="Chumley T.W."/>
            <person name="Kim K.-J."/>
        </authorList>
    </citation>
    <scope>NUCLEOTIDE SEQUENCE [LARGE SCALE GENOMIC DNA]</scope>
</reference>
<gene>
    <name evidence="1" type="primary">ndhA</name>
    <name type="ORF">JNC1315</name>
</gene>
<geneLocation type="chloroplast"/>
<proteinExistence type="inferred from homology"/>